<gene>
    <name evidence="7" type="primary">echPS</name>
    <name type="ORF">EURHEDRAFT_472053</name>
</gene>
<evidence type="ECO:0000250" key="1">
    <source>
        <dbReference type="UniProtKB" id="A0A1E3B0T2"/>
    </source>
</evidence>
<evidence type="ECO:0000255" key="2"/>
<evidence type="ECO:0000255" key="3">
    <source>
        <dbReference type="PROSITE-ProRule" id="PRU00258"/>
    </source>
</evidence>
<evidence type="ECO:0000256" key="4">
    <source>
        <dbReference type="SAM" id="MobiDB-lite"/>
    </source>
</evidence>
<evidence type="ECO:0000269" key="5">
    <source>
    </source>
</evidence>
<evidence type="ECO:0000269" key="6">
    <source>
    </source>
</evidence>
<evidence type="ECO:0000303" key="7">
    <source>
    </source>
</evidence>
<evidence type="ECO:0000305" key="8"/>
<reference key="1">
    <citation type="journal article" date="2014" name="Nat. Commun.">
        <title>Genomic adaptations of the halophilic Dead Sea filamentous fungus Eurotium rubrum.</title>
        <authorList>
            <person name="Kis-Papo T."/>
            <person name="Weig A.R."/>
            <person name="Riley R."/>
            <person name="Persoh D."/>
            <person name="Salamov A."/>
            <person name="Sun H."/>
            <person name="Lipzen A."/>
            <person name="Wasser S.P."/>
            <person name="Rambold G."/>
            <person name="Grigoriev I.V."/>
            <person name="Nevo E."/>
        </authorList>
    </citation>
    <scope>NUCLEOTIDE SEQUENCE [LARGE SCALE GENOMIC DNA]</scope>
    <source>
        <strain>CBS 135680</strain>
    </source>
</reference>
<reference key="2">
    <citation type="journal article" date="2017" name="Org. Lett.">
        <title>Two prenyltransferases govern a consecutive prenylation cascade in the biosynthesis of echinulin and neoechinulin.</title>
        <authorList>
            <person name="Wohlgemuth V."/>
            <person name="Kindinger F."/>
            <person name="Xie X."/>
            <person name="Wang B.G."/>
            <person name="Li S.M."/>
        </authorList>
    </citation>
    <scope>FUNCTION</scope>
    <scope>PATHWAY</scope>
</reference>
<reference key="3">
    <citation type="journal article" date="2021" name="ACS Chem. Biol.">
        <title>Prenylation and dehydrogenation of a C2-reversely prenylated diketopiperazine as a branching point in the biosynthesis of echinulin family alkaloids in Aspergillus ruber.</title>
        <authorList>
            <person name="Nies J."/>
            <person name="Li S.M."/>
        </authorList>
    </citation>
    <scope>FUNCTION</scope>
    <scope>PATHWAY</scope>
</reference>
<accession>A0A017SQ41</accession>
<name>ECHPS_ASPRC</name>
<feature type="chain" id="PRO_0000457010" description="Nonribosomal peptide synthetase echPS">
    <location>
        <begin position="1"/>
        <end position="2092"/>
    </location>
</feature>
<feature type="domain" description="Carrier 1" evidence="3">
    <location>
        <begin position="524"/>
        <end position="600"/>
    </location>
</feature>
<feature type="domain" description="Carrier 2" evidence="3">
    <location>
        <begin position="1544"/>
        <end position="1622"/>
    </location>
</feature>
<feature type="region of interest" description="Adenylation 1" evidence="2">
    <location>
        <begin position="13"/>
        <end position="406"/>
    </location>
</feature>
<feature type="region of interest" description="Disordered" evidence="4">
    <location>
        <begin position="596"/>
        <end position="626"/>
    </location>
</feature>
<feature type="region of interest" description="Condensation 1" evidence="2">
    <location>
        <begin position="624"/>
        <end position="1017"/>
    </location>
</feature>
<feature type="region of interest" description="Adenylation 2" evidence="2">
    <location>
        <begin position="1068"/>
        <end position="1446"/>
    </location>
</feature>
<feature type="region of interest" description="Condensation 2" evidence="2">
    <location>
        <begin position="1663"/>
        <end position="2047"/>
    </location>
</feature>
<feature type="compositionally biased region" description="Polar residues" evidence="4">
    <location>
        <begin position="605"/>
        <end position="624"/>
    </location>
</feature>
<feature type="modified residue" description="O-(pantetheine 4'-phosphoryl)serine" evidence="3">
    <location>
        <position position="561"/>
    </location>
</feature>
<feature type="modified residue" description="O-(pantetheine 4'-phosphoryl)serine" evidence="3">
    <location>
        <position position="1582"/>
    </location>
</feature>
<comment type="function">
    <text evidence="1 5 6">Nonribosomal peptide synthetase; part of the gene cluster that mediates the biosynthesis of echinulin family alkaloid (PubMed:29072465, PubMed:33381959). The pathway begins with the biosynthesis of the cyclic dipeptide cyclo-L-Trp-L-Ala (cyclo-TA) by the NRPS echPS via condensation of L-alanine and L-tryptophan (By similarity). The prenyltransferase echPT1 then catalyzes the first prenylation step, a reverse prenylation reaction at C2, to yield preechinulin (PubMed:33381959). Preechinulin is the substrate of the cytochrome P450 monooxygenase echP450 that catalyzes the formation of the double bond between C10 and C11 to produce neoechulin A (PubMed:33381959). The unique prenyltransferase echPT2 functions as a competitive enzyme with echP450 for preechinulin metabolization and uses preechinulin for effective regiospecific prenylations. Preechinulin is prenylated by echPT2 at C5 or C7. C7-prenylation leads to accumulation of tardioxopiperazine B without further modification by echPT2. In contrast, the C5-prenylated tardioxopiperazine A can be prenylated again by echPT2, predominantly at C7 to form echinulin or less frequently at C4 to give variecolorin L. EchPT2 also accepts neoechilunin A to produce varlecolorin G (prenylation at C5) or isoechinulin A (prenylation at C7). EchPT2 further converts isoechinulin A into dehydroechinulin. Moreover, a yet unidentified enzyme can also convert neoechilunin A into neoechilunin B by introducing a double bond between positions C14 and C17 and thus provides a further substrate to echPT2 for C5 and C7 prenylation (PubMed:33381959).</text>
</comment>
<comment type="catalytic activity">
    <reaction evidence="1">
        <text>L-tryptophan + L-alanine + 2 ATP = cyclo(L-tryptophyl-L-alanyl) + 2 ADP + 2 phosphate + 2 H(+)</text>
        <dbReference type="Rhea" id="RHEA:73763"/>
        <dbReference type="ChEBI" id="CHEBI:15378"/>
        <dbReference type="ChEBI" id="CHEBI:30616"/>
        <dbReference type="ChEBI" id="CHEBI:43474"/>
        <dbReference type="ChEBI" id="CHEBI:57912"/>
        <dbReference type="ChEBI" id="CHEBI:57972"/>
        <dbReference type="ChEBI" id="CHEBI:193002"/>
        <dbReference type="ChEBI" id="CHEBI:456216"/>
    </reaction>
    <physiologicalReaction direction="left-to-right" evidence="1">
        <dbReference type="Rhea" id="RHEA:73764"/>
    </physiologicalReaction>
</comment>
<comment type="cofactor">
    <cofactor evidence="3">
        <name>pantetheine 4'-phosphate</name>
        <dbReference type="ChEBI" id="CHEBI:47942"/>
    </cofactor>
</comment>
<comment type="pathway">
    <text evidence="1">Secondary metabolite biosynthesis.</text>
</comment>
<comment type="pathway">
    <text evidence="1">Alkaloid biosynthesis.</text>
</comment>
<comment type="domain">
    <text evidence="1">NRP synthetases are composed of discrete domains (adenylation (A), thiolation (T) or peptidyl carrier protein (PCP) and condensation (C) domains) which when grouped together are referred to as a single module. Each module is responsible for the recognition (via the A domain) and incorporation of a single amino acid into the growing peptide product. Thus, an NRP synthetase is generally composed of one or more modules and can terminate in a thioesterase domain (TE) that releases the newly synthesized peptide from the enzyme. Occasionally, epimerase (E) domains (responsible for L- to D-amino acid conversion) are present within the NRP synthetase. EchPS has the following architecture: A-T-C-A-T-C.</text>
</comment>
<comment type="similarity">
    <text evidence="8">Belongs to the NRP synthetase family.</text>
</comment>
<comment type="sequence caution" evidence="8">
    <conflict type="erroneous gene model prediction">
        <sequence resource="EMBL-CDS" id="EYE98744"/>
    </conflict>
</comment>
<organism>
    <name type="scientific">Aspergillus ruber (strain CBS 135680)</name>
    <dbReference type="NCBI Taxonomy" id="1388766"/>
    <lineage>
        <taxon>Eukaryota</taxon>
        <taxon>Fungi</taxon>
        <taxon>Dikarya</taxon>
        <taxon>Ascomycota</taxon>
        <taxon>Pezizomycotina</taxon>
        <taxon>Eurotiomycetes</taxon>
        <taxon>Eurotiomycetidae</taxon>
        <taxon>Eurotiales</taxon>
        <taxon>Aspergillaceae</taxon>
        <taxon>Aspergillus</taxon>
        <taxon>Aspergillus subgen. Aspergillus</taxon>
    </lineage>
</organism>
<protein>
    <recommendedName>
        <fullName evidence="7">Nonribosomal peptide synthetase echPS</fullName>
        <shortName evidence="7">NRPS echPS</shortName>
        <ecNumber evidence="1">6.3.2.-</ecNumber>
    </recommendedName>
    <alternativeName>
        <fullName evidence="7">Echinulin biosynthesis cluster protein echPS</fullName>
    </alternativeName>
    <alternativeName>
        <fullName evidence="7">Echinulin pepdite synthetase</fullName>
        <shortName evidence="7">EchPS</shortName>
    </alternativeName>
</protein>
<sequence>MGSIESDSVLSFFSQRCCQNPDNTAIDDGPNGKLSYSQLDQQSSALAYCLQQNGITAGQVIPLLTTSRLEMVIAVLGILKAGGVYVPIDVDQWPADRINYVLSRTCSGLVVYTGDNIPSGVSLEEECRTVQVQIWPESALETQYEPNRRPQLMCIIFTSGTTDKPKGVMIPHSSVARFVTSPGFNYDIVPGDRLLLVLSVAFDGMGTLFNTICNGGTVILANRLNFQERSRQCTVLVVTPSILDVLSPPQSPSDYPSLERIFLGGETPSQQLLEAWSAFNDVALWIAYGPTEATCAVLSGRLQASSETGKFHPTRLGHCIPGSNVLLLTEEMETVQDRDTEGEICIEGPCLTDGYWQDENRTKDRFIEYQGRRVYRTGDLGRFVTTEDSETAIEFCGRRDRVTKIRGFLVNLELDVDAGLRRLDQNITAVFSVVLDKKLCTAVVPSSVDCRHLQAAWRLVAPPYLVPDKMVALNDLPLTANGKFDPRQVISILRDVMQKDAIMQNSISHDNPDANNRKQYSWHSGPLTIGQAILIGIQQVLGVSQGEINLKDSAVFQGVHSLAAAKLSTFCRHHGYNVSVESILTEPSLHSLIEKSRHETEDTPDSSAFATRTPEESSMPTQGPVTPLQKRMVLDSIVEDPRANCLQHISWYKMEDIGRLREAWKMVVTHEPVFQTSFELDDTQEPSQRLIGAGIFIWEETTVTTYAAIEESLKSLPAATGLGSRFRVLHCVGPEFPRSESIFVWAVHHALIDGYSASLVFEKVDKALKDEPFESSHPFTLAAQDIAQMRDKIAPEVDHFWKDQETQYPGAAGEPLIPEALTDQSGMDFAEHVANVSIDSQRLRFAAQQAQATPAAIFYAAWALLLSSYTNSDTVIFGAVFSGRNLPFSWAPCMVGPLLNILPLRCRIEREVESASFVREIHQTIQDISRFQVADRPKNTPPFASTLTVQDSGLRSGTTAISSLRNPEVRESNLLPLTVVVENDGQITFLYRTDRFSESHVKDMAAIYTSLLDAFLDPGRNLQDCMNRRFPIEMNRTILQTGNIDSEISRVPSVNGGHTLSSLFGMVASLYPTHVAVQKGPHSVTYATLVQCAARVAAVVEQKTQPGEVVAILADRSINWIVGIMGATIANTVYCPLDSSYPAEYREDLLRRSHAKLFLVPSRSQLPTADNGVTAISIEGILASDIEPLCPWRTQKPSDGAYICFTSGSTGVPKGVLCQHQGVVSLQSCSIEGRLHSKPGRRIAQFMSTGFDVCVHEVFASLCYGGTLVLRKDDDDPFSHLADVDVVSMNATVAGSLDPSEYSDLDYVYLAGEPIPQRTADKWAVDRELYNAYGPTEATIIVTRTRLEAGVPVAIGQPFPSVRAYILNDHRELQPPNTLGNLFVAGVQVSHGYLDLPEVTAKSYFPDPFLPESFNERMYDTGDIGFWDTDGKIQCCGRKDRQVKVRGFRINLDGISNMATLRMPTIRHAAAFVKDGGVVLCVEPEDVDTGELRSRLKDALPPHAIPRTIYSIAHIPLSLNGKIDVKSLAAMEVRNGTVPTNGVIKTTHLEKLIAQEWQQLLGLDPAQPLSRSDDFVLLGGDSIRQLNLAARLRSVLGLPIKVKDIIRSSTLGDLVILVAQQQEQHGKKNAPNGAPAHSIVDRPLGFKNLSPPEMEWACKYRHSQSQSTFNVSYVARLSPAVDWQRLASAFETVLNRHRVLRSRFAVRRDGSNERVLSEYPISVKRTVHDVNIQEVINQPFEIDSSEALIHTIVSPSTLVLCISHILCDLTSINTLLYEVADTYHGLTLSPVVREYFDVTWHHTVDQEKQRFWAEYLEGLSFKKPNLASQIREPRSYRGTSRTTSLSDSLYRRLIISSTKNGFTFHQFGMAVAGLVLHFLTGRDDIVLGSPFVNRPSFEDRQVIGLFLEPLPVRISVKHQNENNGGPDAREFVQSVRQSSQSALAHSVPWSELMSHLGLPFPSAQPQLFSCCVTFHDDRGTEPPLAIQGVEGQYVSAEGAKFPLLFEWQATRASEHEQLTVRLEYDTDWLSAEFVEILEALLLECFRILLEEEDSHHGEVKERLGEVLRSEATRIGVGVNEICEMARQHLMVV</sequence>
<dbReference type="EC" id="6.3.2.-" evidence="1"/>
<dbReference type="EMBL" id="KK088413">
    <property type="protein sequence ID" value="EYE98744.1"/>
    <property type="status" value="ALT_SEQ"/>
    <property type="molecule type" value="Genomic_DNA"/>
</dbReference>
<dbReference type="SMR" id="A0A017SQ41"/>
<dbReference type="STRING" id="1388766.A0A017SQ41"/>
<dbReference type="HOGENOM" id="CLU_000022_0_5_1"/>
<dbReference type="OrthoDB" id="416786at2759"/>
<dbReference type="Proteomes" id="UP000019804">
    <property type="component" value="Unassembled WGS sequence"/>
</dbReference>
<dbReference type="GO" id="GO:0005737">
    <property type="term" value="C:cytoplasm"/>
    <property type="evidence" value="ECO:0007669"/>
    <property type="project" value="TreeGrafter"/>
</dbReference>
<dbReference type="GO" id="GO:0016874">
    <property type="term" value="F:ligase activity"/>
    <property type="evidence" value="ECO:0007669"/>
    <property type="project" value="UniProtKB-KW"/>
</dbReference>
<dbReference type="GO" id="GO:0031177">
    <property type="term" value="F:phosphopantetheine binding"/>
    <property type="evidence" value="ECO:0007669"/>
    <property type="project" value="TreeGrafter"/>
</dbReference>
<dbReference type="GO" id="GO:0043041">
    <property type="term" value="P:amino acid activation for nonribosomal peptide biosynthetic process"/>
    <property type="evidence" value="ECO:0007669"/>
    <property type="project" value="TreeGrafter"/>
</dbReference>
<dbReference type="GO" id="GO:0044550">
    <property type="term" value="P:secondary metabolite biosynthetic process"/>
    <property type="evidence" value="ECO:0007669"/>
    <property type="project" value="TreeGrafter"/>
</dbReference>
<dbReference type="CDD" id="cd19537">
    <property type="entry name" value="C_NRPS-like"/>
    <property type="match status" value="1"/>
</dbReference>
<dbReference type="Gene3D" id="3.30.300.30">
    <property type="match status" value="2"/>
</dbReference>
<dbReference type="Gene3D" id="1.10.1200.10">
    <property type="entry name" value="ACP-like"/>
    <property type="match status" value="1"/>
</dbReference>
<dbReference type="Gene3D" id="3.30.559.10">
    <property type="entry name" value="Chloramphenicol acetyltransferase-like domain"/>
    <property type="match status" value="2"/>
</dbReference>
<dbReference type="Gene3D" id="3.40.50.12780">
    <property type="entry name" value="N-terminal domain of ligase-like"/>
    <property type="match status" value="2"/>
</dbReference>
<dbReference type="Gene3D" id="3.30.559.30">
    <property type="entry name" value="Nonribosomal peptide synthetase, condensation domain"/>
    <property type="match status" value="2"/>
</dbReference>
<dbReference type="InterPro" id="IPR036736">
    <property type="entry name" value="ACP-like_sf"/>
</dbReference>
<dbReference type="InterPro" id="IPR045851">
    <property type="entry name" value="AMP-bd_C_sf"/>
</dbReference>
<dbReference type="InterPro" id="IPR020845">
    <property type="entry name" value="AMP-binding_CS"/>
</dbReference>
<dbReference type="InterPro" id="IPR000873">
    <property type="entry name" value="AMP-dep_synth/lig_dom"/>
</dbReference>
<dbReference type="InterPro" id="IPR042099">
    <property type="entry name" value="ANL_N_sf"/>
</dbReference>
<dbReference type="InterPro" id="IPR023213">
    <property type="entry name" value="CAT-like_dom_sf"/>
</dbReference>
<dbReference type="InterPro" id="IPR001242">
    <property type="entry name" value="Condensatn"/>
</dbReference>
<dbReference type="InterPro" id="IPR009081">
    <property type="entry name" value="PP-bd_ACP"/>
</dbReference>
<dbReference type="InterPro" id="IPR006162">
    <property type="entry name" value="Ppantetheine_attach_site"/>
</dbReference>
<dbReference type="PANTHER" id="PTHR45527">
    <property type="entry name" value="NONRIBOSOMAL PEPTIDE SYNTHETASE"/>
    <property type="match status" value="1"/>
</dbReference>
<dbReference type="PANTHER" id="PTHR45527:SF11">
    <property type="entry name" value="NONRIBOSOMAL PEPTIDE SYNTHETASE 5"/>
    <property type="match status" value="1"/>
</dbReference>
<dbReference type="Pfam" id="PF00501">
    <property type="entry name" value="AMP-binding"/>
    <property type="match status" value="2"/>
</dbReference>
<dbReference type="Pfam" id="PF00668">
    <property type="entry name" value="Condensation"/>
    <property type="match status" value="2"/>
</dbReference>
<dbReference type="Pfam" id="PF00550">
    <property type="entry name" value="PP-binding"/>
    <property type="match status" value="1"/>
</dbReference>
<dbReference type="SUPFAM" id="SSF56801">
    <property type="entry name" value="Acetyl-CoA synthetase-like"/>
    <property type="match status" value="2"/>
</dbReference>
<dbReference type="SUPFAM" id="SSF47336">
    <property type="entry name" value="ACP-like"/>
    <property type="match status" value="1"/>
</dbReference>
<dbReference type="SUPFAM" id="SSF52777">
    <property type="entry name" value="CoA-dependent acyltransferases"/>
    <property type="match status" value="4"/>
</dbReference>
<dbReference type="PROSITE" id="PS00455">
    <property type="entry name" value="AMP_BINDING"/>
    <property type="match status" value="1"/>
</dbReference>
<dbReference type="PROSITE" id="PS50075">
    <property type="entry name" value="CARRIER"/>
    <property type="match status" value="1"/>
</dbReference>
<dbReference type="PROSITE" id="PS00012">
    <property type="entry name" value="PHOSPHOPANTETHEINE"/>
    <property type="match status" value="1"/>
</dbReference>
<proteinExistence type="inferred from homology"/>
<keyword id="KW-0436">Ligase</keyword>
<keyword id="KW-0596">Phosphopantetheine</keyword>
<keyword id="KW-0597">Phosphoprotein</keyword>
<keyword id="KW-1185">Reference proteome</keyword>
<keyword id="KW-0677">Repeat</keyword>